<protein>
    <recommendedName>
        <fullName evidence="1">Lipoyl synthase</fullName>
        <ecNumber evidence="1">2.8.1.8</ecNumber>
    </recommendedName>
    <alternativeName>
        <fullName evidence="1">Lip-syn</fullName>
        <shortName evidence="1">LS</shortName>
    </alternativeName>
    <alternativeName>
        <fullName evidence="1">Lipoate synthase</fullName>
    </alternativeName>
    <alternativeName>
        <fullName evidence="1">Lipoic acid synthase</fullName>
    </alternativeName>
    <alternativeName>
        <fullName evidence="1">Sulfur insertion protein LipA</fullName>
    </alternativeName>
</protein>
<dbReference type="EC" id="2.8.1.8" evidence="1"/>
<dbReference type="EMBL" id="CU633749">
    <property type="protein sequence ID" value="CAP62736.1"/>
    <property type="molecule type" value="Genomic_DNA"/>
</dbReference>
<dbReference type="RefSeq" id="WP_012351405.1">
    <property type="nucleotide sequence ID" value="NC_010528.1"/>
</dbReference>
<dbReference type="SMR" id="B2AG37"/>
<dbReference type="GeneID" id="29760612"/>
<dbReference type="KEGG" id="cti:RALTA_A0063"/>
<dbReference type="eggNOG" id="COG0320">
    <property type="taxonomic scope" value="Bacteria"/>
</dbReference>
<dbReference type="HOGENOM" id="CLU_033144_2_1_4"/>
<dbReference type="BioCyc" id="CTAI977880:RALTA_RS00315-MONOMER"/>
<dbReference type="UniPathway" id="UPA00538">
    <property type="reaction ID" value="UER00593"/>
</dbReference>
<dbReference type="Proteomes" id="UP000001692">
    <property type="component" value="Chromosome 1"/>
</dbReference>
<dbReference type="GO" id="GO:0005737">
    <property type="term" value="C:cytoplasm"/>
    <property type="evidence" value="ECO:0007669"/>
    <property type="project" value="UniProtKB-SubCell"/>
</dbReference>
<dbReference type="GO" id="GO:0051539">
    <property type="term" value="F:4 iron, 4 sulfur cluster binding"/>
    <property type="evidence" value="ECO:0007669"/>
    <property type="project" value="UniProtKB-UniRule"/>
</dbReference>
<dbReference type="GO" id="GO:0016992">
    <property type="term" value="F:lipoate synthase activity"/>
    <property type="evidence" value="ECO:0007669"/>
    <property type="project" value="UniProtKB-UniRule"/>
</dbReference>
<dbReference type="GO" id="GO:0046872">
    <property type="term" value="F:metal ion binding"/>
    <property type="evidence" value="ECO:0007669"/>
    <property type="project" value="UniProtKB-KW"/>
</dbReference>
<dbReference type="CDD" id="cd01335">
    <property type="entry name" value="Radical_SAM"/>
    <property type="match status" value="1"/>
</dbReference>
<dbReference type="FunFam" id="3.20.20.70:FF:000040">
    <property type="entry name" value="Lipoyl synthase"/>
    <property type="match status" value="1"/>
</dbReference>
<dbReference type="Gene3D" id="3.20.20.70">
    <property type="entry name" value="Aldolase class I"/>
    <property type="match status" value="1"/>
</dbReference>
<dbReference type="HAMAP" id="MF_00206">
    <property type="entry name" value="Lipoyl_synth"/>
    <property type="match status" value="1"/>
</dbReference>
<dbReference type="InterPro" id="IPR013785">
    <property type="entry name" value="Aldolase_TIM"/>
</dbReference>
<dbReference type="InterPro" id="IPR006638">
    <property type="entry name" value="Elp3/MiaA/NifB-like_rSAM"/>
</dbReference>
<dbReference type="InterPro" id="IPR031691">
    <property type="entry name" value="LIAS_N"/>
</dbReference>
<dbReference type="InterPro" id="IPR003698">
    <property type="entry name" value="Lipoyl_synth"/>
</dbReference>
<dbReference type="InterPro" id="IPR007197">
    <property type="entry name" value="rSAM"/>
</dbReference>
<dbReference type="NCBIfam" id="TIGR00510">
    <property type="entry name" value="lipA"/>
    <property type="match status" value="1"/>
</dbReference>
<dbReference type="NCBIfam" id="NF004019">
    <property type="entry name" value="PRK05481.1"/>
    <property type="match status" value="1"/>
</dbReference>
<dbReference type="NCBIfam" id="NF009544">
    <property type="entry name" value="PRK12928.1"/>
    <property type="match status" value="1"/>
</dbReference>
<dbReference type="PANTHER" id="PTHR10949">
    <property type="entry name" value="LIPOYL SYNTHASE"/>
    <property type="match status" value="1"/>
</dbReference>
<dbReference type="PANTHER" id="PTHR10949:SF0">
    <property type="entry name" value="LIPOYL SYNTHASE, MITOCHONDRIAL"/>
    <property type="match status" value="1"/>
</dbReference>
<dbReference type="Pfam" id="PF16881">
    <property type="entry name" value="LIAS_N"/>
    <property type="match status" value="1"/>
</dbReference>
<dbReference type="Pfam" id="PF04055">
    <property type="entry name" value="Radical_SAM"/>
    <property type="match status" value="1"/>
</dbReference>
<dbReference type="PIRSF" id="PIRSF005963">
    <property type="entry name" value="Lipoyl_synth"/>
    <property type="match status" value="1"/>
</dbReference>
<dbReference type="SFLD" id="SFLDF00271">
    <property type="entry name" value="lipoyl_synthase"/>
    <property type="match status" value="1"/>
</dbReference>
<dbReference type="SFLD" id="SFLDG01058">
    <property type="entry name" value="lipoyl_synthase_like"/>
    <property type="match status" value="1"/>
</dbReference>
<dbReference type="SMART" id="SM00729">
    <property type="entry name" value="Elp3"/>
    <property type="match status" value="1"/>
</dbReference>
<dbReference type="SUPFAM" id="SSF102114">
    <property type="entry name" value="Radical SAM enzymes"/>
    <property type="match status" value="1"/>
</dbReference>
<dbReference type="PROSITE" id="PS51918">
    <property type="entry name" value="RADICAL_SAM"/>
    <property type="match status" value="1"/>
</dbReference>
<evidence type="ECO:0000255" key="1">
    <source>
        <dbReference type="HAMAP-Rule" id="MF_00206"/>
    </source>
</evidence>
<evidence type="ECO:0000255" key="2">
    <source>
        <dbReference type="PROSITE-ProRule" id="PRU01266"/>
    </source>
</evidence>
<evidence type="ECO:0000256" key="3">
    <source>
        <dbReference type="SAM" id="MobiDB-lite"/>
    </source>
</evidence>
<feature type="chain" id="PRO_1000099599" description="Lipoyl synthase">
    <location>
        <begin position="1"/>
        <end position="334"/>
    </location>
</feature>
<feature type="domain" description="Radical SAM core" evidence="2">
    <location>
        <begin position="92"/>
        <end position="310"/>
    </location>
</feature>
<feature type="region of interest" description="Disordered" evidence="3">
    <location>
        <begin position="1"/>
        <end position="36"/>
    </location>
</feature>
<feature type="compositionally biased region" description="Low complexity" evidence="3">
    <location>
        <begin position="7"/>
        <end position="20"/>
    </location>
</feature>
<feature type="compositionally biased region" description="Basic and acidic residues" evidence="3">
    <location>
        <begin position="21"/>
        <end position="36"/>
    </location>
</feature>
<feature type="binding site" evidence="1">
    <location>
        <position position="81"/>
    </location>
    <ligand>
        <name>[4Fe-4S] cluster</name>
        <dbReference type="ChEBI" id="CHEBI:49883"/>
        <label>1</label>
    </ligand>
</feature>
<feature type="binding site" evidence="1">
    <location>
        <position position="86"/>
    </location>
    <ligand>
        <name>[4Fe-4S] cluster</name>
        <dbReference type="ChEBI" id="CHEBI:49883"/>
        <label>1</label>
    </ligand>
</feature>
<feature type="binding site" evidence="1">
    <location>
        <position position="92"/>
    </location>
    <ligand>
        <name>[4Fe-4S] cluster</name>
        <dbReference type="ChEBI" id="CHEBI:49883"/>
        <label>1</label>
    </ligand>
</feature>
<feature type="binding site" evidence="1">
    <location>
        <position position="107"/>
    </location>
    <ligand>
        <name>[4Fe-4S] cluster</name>
        <dbReference type="ChEBI" id="CHEBI:49883"/>
        <label>2</label>
        <note>4Fe-4S-S-AdoMet</note>
    </ligand>
</feature>
<feature type="binding site" evidence="1">
    <location>
        <position position="111"/>
    </location>
    <ligand>
        <name>[4Fe-4S] cluster</name>
        <dbReference type="ChEBI" id="CHEBI:49883"/>
        <label>2</label>
        <note>4Fe-4S-S-AdoMet</note>
    </ligand>
</feature>
<feature type="binding site" evidence="1">
    <location>
        <position position="114"/>
    </location>
    <ligand>
        <name>[4Fe-4S] cluster</name>
        <dbReference type="ChEBI" id="CHEBI:49883"/>
        <label>2</label>
        <note>4Fe-4S-S-AdoMet</note>
    </ligand>
</feature>
<feature type="binding site" evidence="1">
    <location>
        <position position="321"/>
    </location>
    <ligand>
        <name>[4Fe-4S] cluster</name>
        <dbReference type="ChEBI" id="CHEBI:49883"/>
        <label>1</label>
    </ligand>
</feature>
<proteinExistence type="inferred from homology"/>
<name>LIPA_CUPTR</name>
<sequence length="334" mass="37271">MSDALIAPNASSSEAPQSPAEHYDPTRKQKSADKTARIPIKIVPAEKLKKPDWIRVKAATGNSRFYEIKDILRANNLVTVCEEASCPNIGECFGKGTATFMIMGDKCTRRCPFCDVGHGRPDPLDVNEPGNLARTIAQLKLNYVVITSVDRDDLRDGGAQHYVDCISQTRELSPATRIEVLVPDFRGRLDKALDILQACPPDVMNHNMETVPRLYKQARPGADYAHSLKLLQEFKRRNPNVPTKSGLMVGLGETDEEILEVMRDMRAHDIDMLTIGQYLAPSNHHLPVLRYVHPDTFKMFEEEAYKMGFTHAAVGAMVRSSYHADQQAHQAGFA</sequence>
<gene>
    <name evidence="1" type="primary">lipA</name>
    <name type="ordered locus">RALTA_A0063</name>
</gene>
<comment type="function">
    <text evidence="1">Catalyzes the radical-mediated insertion of two sulfur atoms into the C-6 and C-8 positions of the octanoyl moiety bound to the lipoyl domains of lipoate-dependent enzymes, thereby converting the octanoylated domains into lipoylated derivatives.</text>
</comment>
<comment type="catalytic activity">
    <reaction evidence="1">
        <text>[[Fe-S] cluster scaffold protein carrying a second [4Fe-4S](2+) cluster] + N(6)-octanoyl-L-lysyl-[protein] + 2 oxidized [2Fe-2S]-[ferredoxin] + 2 S-adenosyl-L-methionine + 4 H(+) = [[Fe-S] cluster scaffold protein] + N(6)-[(R)-dihydrolipoyl]-L-lysyl-[protein] + 4 Fe(3+) + 2 hydrogen sulfide + 2 5'-deoxyadenosine + 2 L-methionine + 2 reduced [2Fe-2S]-[ferredoxin]</text>
        <dbReference type="Rhea" id="RHEA:16585"/>
        <dbReference type="Rhea" id="RHEA-COMP:9928"/>
        <dbReference type="Rhea" id="RHEA-COMP:10000"/>
        <dbReference type="Rhea" id="RHEA-COMP:10001"/>
        <dbReference type="Rhea" id="RHEA-COMP:10475"/>
        <dbReference type="Rhea" id="RHEA-COMP:14568"/>
        <dbReference type="Rhea" id="RHEA-COMP:14569"/>
        <dbReference type="ChEBI" id="CHEBI:15378"/>
        <dbReference type="ChEBI" id="CHEBI:17319"/>
        <dbReference type="ChEBI" id="CHEBI:29034"/>
        <dbReference type="ChEBI" id="CHEBI:29919"/>
        <dbReference type="ChEBI" id="CHEBI:33722"/>
        <dbReference type="ChEBI" id="CHEBI:33737"/>
        <dbReference type="ChEBI" id="CHEBI:33738"/>
        <dbReference type="ChEBI" id="CHEBI:57844"/>
        <dbReference type="ChEBI" id="CHEBI:59789"/>
        <dbReference type="ChEBI" id="CHEBI:78809"/>
        <dbReference type="ChEBI" id="CHEBI:83100"/>
        <dbReference type="EC" id="2.8.1.8"/>
    </reaction>
</comment>
<comment type="cofactor">
    <cofactor evidence="1">
        <name>[4Fe-4S] cluster</name>
        <dbReference type="ChEBI" id="CHEBI:49883"/>
    </cofactor>
    <text evidence="1">Binds 2 [4Fe-4S] clusters per subunit. One cluster is coordinated with 3 cysteines and an exchangeable S-adenosyl-L-methionine.</text>
</comment>
<comment type="pathway">
    <text evidence="1">Protein modification; protein lipoylation via endogenous pathway; protein N(6)-(lipoyl)lysine from octanoyl-[acyl-carrier-protein]: step 2/2.</text>
</comment>
<comment type="subcellular location">
    <subcellularLocation>
        <location evidence="1">Cytoplasm</location>
    </subcellularLocation>
</comment>
<comment type="similarity">
    <text evidence="1">Belongs to the radical SAM superfamily. Lipoyl synthase family.</text>
</comment>
<organism>
    <name type="scientific">Cupriavidus taiwanensis (strain DSM 17343 / BCRC 17206 / CCUG 44338 / CIP 107171 / LMG 19424 / R1)</name>
    <name type="common">Ralstonia taiwanensis (strain LMG 19424)</name>
    <dbReference type="NCBI Taxonomy" id="977880"/>
    <lineage>
        <taxon>Bacteria</taxon>
        <taxon>Pseudomonadati</taxon>
        <taxon>Pseudomonadota</taxon>
        <taxon>Betaproteobacteria</taxon>
        <taxon>Burkholderiales</taxon>
        <taxon>Burkholderiaceae</taxon>
        <taxon>Cupriavidus</taxon>
    </lineage>
</organism>
<accession>B2AG37</accession>
<keyword id="KW-0004">4Fe-4S</keyword>
<keyword id="KW-0963">Cytoplasm</keyword>
<keyword id="KW-0408">Iron</keyword>
<keyword id="KW-0411">Iron-sulfur</keyword>
<keyword id="KW-0479">Metal-binding</keyword>
<keyword id="KW-0949">S-adenosyl-L-methionine</keyword>
<keyword id="KW-0808">Transferase</keyword>
<reference key="1">
    <citation type="journal article" date="2008" name="Genome Res.">
        <title>Genome sequence of the beta-rhizobium Cupriavidus taiwanensis and comparative genomics of rhizobia.</title>
        <authorList>
            <person name="Amadou C."/>
            <person name="Pascal G."/>
            <person name="Mangenot S."/>
            <person name="Glew M."/>
            <person name="Bontemps C."/>
            <person name="Capela D."/>
            <person name="Carrere S."/>
            <person name="Cruveiller S."/>
            <person name="Dossat C."/>
            <person name="Lajus A."/>
            <person name="Marchetti M."/>
            <person name="Poinsot V."/>
            <person name="Rouy Z."/>
            <person name="Servin B."/>
            <person name="Saad M."/>
            <person name="Schenowitz C."/>
            <person name="Barbe V."/>
            <person name="Batut J."/>
            <person name="Medigue C."/>
            <person name="Masson-Boivin C."/>
        </authorList>
    </citation>
    <scope>NUCLEOTIDE SEQUENCE [LARGE SCALE GENOMIC DNA]</scope>
    <source>
        <strain>DSM 17343 / BCRC 17206 / CCUG 44338 / CIP 107171 / LMG 19424 / R1</strain>
    </source>
</reference>